<evidence type="ECO:0000255" key="1">
    <source>
        <dbReference type="HAMAP-Rule" id="MF_01691"/>
    </source>
</evidence>
<proteinExistence type="inferred from homology"/>
<name>DAPH_LISMH</name>
<dbReference type="EC" id="2.3.1.89" evidence="1"/>
<dbReference type="EMBL" id="CP001175">
    <property type="protein sequence ID" value="ACK39953.1"/>
    <property type="molecule type" value="Genomic_DNA"/>
</dbReference>
<dbReference type="SMR" id="B8DEC4"/>
<dbReference type="KEGG" id="lmh:LMHCC_1610"/>
<dbReference type="HOGENOM" id="CLU_103751_0_0_9"/>
<dbReference type="UniPathway" id="UPA00034">
    <property type="reaction ID" value="UER00022"/>
</dbReference>
<dbReference type="GO" id="GO:0047200">
    <property type="term" value="F:tetrahydrodipicolinate N-acetyltransferase activity"/>
    <property type="evidence" value="ECO:0007669"/>
    <property type="project" value="UniProtKB-EC"/>
</dbReference>
<dbReference type="GO" id="GO:0019877">
    <property type="term" value="P:diaminopimelate biosynthetic process"/>
    <property type="evidence" value="ECO:0007669"/>
    <property type="project" value="UniProtKB-UniRule"/>
</dbReference>
<dbReference type="GO" id="GO:0009089">
    <property type="term" value="P:lysine biosynthetic process via diaminopimelate"/>
    <property type="evidence" value="ECO:0007669"/>
    <property type="project" value="UniProtKB-UniRule"/>
</dbReference>
<dbReference type="Gene3D" id="2.160.10.10">
    <property type="entry name" value="Hexapeptide repeat proteins"/>
    <property type="match status" value="1"/>
</dbReference>
<dbReference type="Gene3D" id="3.30.70.250">
    <property type="entry name" value="Malonyl-CoA ACP transacylase, ACP-binding"/>
    <property type="match status" value="1"/>
</dbReference>
<dbReference type="HAMAP" id="MF_01691">
    <property type="entry name" value="DapH"/>
    <property type="match status" value="1"/>
</dbReference>
<dbReference type="InterPro" id="IPR019873">
    <property type="entry name" value="DapH"/>
</dbReference>
<dbReference type="InterPro" id="IPR013710">
    <property type="entry name" value="DapH_N"/>
</dbReference>
<dbReference type="InterPro" id="IPR001451">
    <property type="entry name" value="Hexapep"/>
</dbReference>
<dbReference type="InterPro" id="IPR018357">
    <property type="entry name" value="Hexapep_transf_CS"/>
</dbReference>
<dbReference type="InterPro" id="IPR050179">
    <property type="entry name" value="Trans_hexapeptide_repeat"/>
</dbReference>
<dbReference type="InterPro" id="IPR011004">
    <property type="entry name" value="Trimer_LpxA-like_sf"/>
</dbReference>
<dbReference type="NCBIfam" id="TIGR03532">
    <property type="entry name" value="DapD_Ac"/>
    <property type="match status" value="1"/>
</dbReference>
<dbReference type="PANTHER" id="PTHR43300:SF10">
    <property type="entry name" value="2,3,4,5-TETRAHYDROPYRIDINE-2,6-DICARBOXYLATE N-ACETYLTRANSFERASE"/>
    <property type="match status" value="1"/>
</dbReference>
<dbReference type="PANTHER" id="PTHR43300">
    <property type="entry name" value="ACETYLTRANSFERASE"/>
    <property type="match status" value="1"/>
</dbReference>
<dbReference type="Pfam" id="PF08503">
    <property type="entry name" value="DapH_N"/>
    <property type="match status" value="1"/>
</dbReference>
<dbReference type="Pfam" id="PF00132">
    <property type="entry name" value="Hexapep"/>
    <property type="match status" value="1"/>
</dbReference>
<dbReference type="Pfam" id="PF14602">
    <property type="entry name" value="Hexapep_2"/>
    <property type="match status" value="1"/>
</dbReference>
<dbReference type="SUPFAM" id="SSF51161">
    <property type="entry name" value="Trimeric LpxA-like enzymes"/>
    <property type="match status" value="1"/>
</dbReference>
<dbReference type="PROSITE" id="PS00101">
    <property type="entry name" value="HEXAPEP_TRANSFERASES"/>
    <property type="match status" value="1"/>
</dbReference>
<organism>
    <name type="scientific">Listeria monocytogenes serotype 4a (strain HCC23)</name>
    <dbReference type="NCBI Taxonomy" id="552536"/>
    <lineage>
        <taxon>Bacteria</taxon>
        <taxon>Bacillati</taxon>
        <taxon>Bacillota</taxon>
        <taxon>Bacilli</taxon>
        <taxon>Bacillales</taxon>
        <taxon>Listeriaceae</taxon>
        <taxon>Listeria</taxon>
    </lineage>
</organism>
<sequence>MEQMDAHQIISFIQNSKKATPVKVYLKGDLEKIDFPSDVKTFITGNAGTIFGEWAVVEPLLEANKANIEDYVIENDRRNSAIPLLDMKNINARIEPGAVIRDQVTIGDNAVIMMGASINIGSVIGDGTMIDMNVVLGGRATVGKNCHIGAGSVLAGVVEPPSAQPVIVEDNVVVGANVVVLEGVRIGEGAVVAAGAIVTKDVAPGTVVAGIPARELKKLDAKTASKTEIMQELRQL</sequence>
<gene>
    <name evidence="1" type="primary">dapH</name>
    <name type="ordered locus">LMHCC_1610</name>
</gene>
<feature type="chain" id="PRO_0000376679" description="2,3,4,5-tetrahydropyridine-2,6-dicarboxylate N-acetyltransferase">
    <location>
        <begin position="1"/>
        <end position="236"/>
    </location>
</feature>
<comment type="function">
    <text evidence="1">Catalyzes the transfer of an acetyl group from acetyl-CoA to tetrahydrodipicolinate.</text>
</comment>
<comment type="catalytic activity">
    <reaction evidence="1">
        <text>(S)-2,3,4,5-tetrahydrodipicolinate + acetyl-CoA + H2O = L-2-acetamido-6-oxoheptanedioate + CoA</text>
        <dbReference type="Rhea" id="RHEA:13085"/>
        <dbReference type="ChEBI" id="CHEBI:15377"/>
        <dbReference type="ChEBI" id="CHEBI:16845"/>
        <dbReference type="ChEBI" id="CHEBI:57287"/>
        <dbReference type="ChEBI" id="CHEBI:57288"/>
        <dbReference type="ChEBI" id="CHEBI:58117"/>
        <dbReference type="EC" id="2.3.1.89"/>
    </reaction>
</comment>
<comment type="pathway">
    <text evidence="1">Amino-acid biosynthesis; L-lysine biosynthesis via DAP pathway; LL-2,6-diaminopimelate from (S)-tetrahydrodipicolinate (acetylase route): step 1/3.</text>
</comment>
<comment type="similarity">
    <text evidence="1">Belongs to the transferase hexapeptide repeat family. DapH subfamily.</text>
</comment>
<keyword id="KW-0012">Acyltransferase</keyword>
<keyword id="KW-0028">Amino-acid biosynthesis</keyword>
<keyword id="KW-0220">Diaminopimelate biosynthesis</keyword>
<keyword id="KW-0457">Lysine biosynthesis</keyword>
<keyword id="KW-0677">Repeat</keyword>
<keyword id="KW-0808">Transferase</keyword>
<protein>
    <recommendedName>
        <fullName evidence="1">2,3,4,5-tetrahydropyridine-2,6-dicarboxylate N-acetyltransferase</fullName>
        <ecNumber evidence="1">2.3.1.89</ecNumber>
    </recommendedName>
    <alternativeName>
        <fullName evidence="1">Tetrahydrodipicolinate N-acetyltransferase</fullName>
        <shortName evidence="1">THP acetyltransferase</shortName>
        <shortName evidence="1">Tetrahydropicolinate acetylase</shortName>
    </alternativeName>
</protein>
<reference key="1">
    <citation type="journal article" date="2011" name="J. Bacteriol.">
        <title>Genome sequence of lineage III Listeria monocytogenes strain HCC23.</title>
        <authorList>
            <person name="Steele C.L."/>
            <person name="Donaldson J.R."/>
            <person name="Paul D."/>
            <person name="Banes M.M."/>
            <person name="Arick T."/>
            <person name="Bridges S.M."/>
            <person name="Lawrence M.L."/>
        </authorList>
    </citation>
    <scope>NUCLEOTIDE SEQUENCE [LARGE SCALE GENOMIC DNA]</scope>
    <source>
        <strain>HCC23</strain>
    </source>
</reference>
<accession>B8DEC4</accession>